<organism>
    <name type="scientific">Neurospora crassa (strain ATCC 24698 / 74-OR23-1A / CBS 708.71 / DSM 1257 / FGSC 987)</name>
    <dbReference type="NCBI Taxonomy" id="367110"/>
    <lineage>
        <taxon>Eukaryota</taxon>
        <taxon>Fungi</taxon>
        <taxon>Dikarya</taxon>
        <taxon>Ascomycota</taxon>
        <taxon>Pezizomycotina</taxon>
        <taxon>Sordariomycetes</taxon>
        <taxon>Sordariomycetidae</taxon>
        <taxon>Sordariales</taxon>
        <taxon>Sordariaceae</taxon>
        <taxon>Neurospora</taxon>
    </lineage>
</organism>
<comment type="function">
    <text evidence="1">Catalyzes the interconversion of methylthioribose-1-phosphate (MTR-1-P) into methylthioribulose-1-phosphate (MTRu-1-P).</text>
</comment>
<comment type="catalytic activity">
    <reaction evidence="1">
        <text>5-(methylsulfanyl)-alpha-D-ribose 1-phosphate = 5-(methylsulfanyl)-D-ribulose 1-phosphate</text>
        <dbReference type="Rhea" id="RHEA:19989"/>
        <dbReference type="ChEBI" id="CHEBI:58533"/>
        <dbReference type="ChEBI" id="CHEBI:58548"/>
        <dbReference type="EC" id="5.3.1.23"/>
    </reaction>
</comment>
<comment type="pathway">
    <text evidence="1">Amino-acid biosynthesis; L-methionine biosynthesis via salvage pathway; L-methionine from S-methyl-5-thio-alpha-D-ribose 1-phosphate: step 1/6.</text>
</comment>
<comment type="subcellular location">
    <subcellularLocation>
        <location evidence="1">Cytoplasm</location>
    </subcellularLocation>
    <subcellularLocation>
        <location evidence="1">Nucleus</location>
    </subcellularLocation>
</comment>
<comment type="similarity">
    <text evidence="1">Belongs to the eIF-2B alpha/beta/delta subunits family. MtnA subfamily.</text>
</comment>
<keyword id="KW-0028">Amino-acid biosynthesis</keyword>
<keyword id="KW-0963">Cytoplasm</keyword>
<keyword id="KW-0413">Isomerase</keyword>
<keyword id="KW-0486">Methionine biosynthesis</keyword>
<keyword id="KW-0539">Nucleus</keyword>
<keyword id="KW-1185">Reference proteome</keyword>
<protein>
    <recommendedName>
        <fullName evidence="1">Methylthioribose-1-phosphate isomerase</fullName>
        <shortName evidence="1">M1Pi</shortName>
        <shortName evidence="1">MTR-1-P isomerase</shortName>
        <ecNumber evidence="1">5.3.1.23</ecNumber>
    </recommendedName>
    <alternativeName>
        <fullName evidence="1">S-methyl-5-thioribose-1-phosphate isomerase</fullName>
    </alternativeName>
    <alternativeName>
        <fullName evidence="1">Translation initiation factor eIF-2B subunit alpha/beta/delta-like protein</fullName>
    </alternativeName>
</protein>
<name>MTNA_NEUCR</name>
<feature type="chain" id="PRO_0000402036" description="Methylthioribose-1-phosphate isomerase">
    <location>
        <begin position="1"/>
        <end position="388"/>
    </location>
</feature>
<feature type="active site" description="Proton donor" evidence="1">
    <location>
        <position position="258"/>
    </location>
</feature>
<feature type="site" description="Transition state stabilizer" evidence="1">
    <location>
        <position position="174"/>
    </location>
</feature>
<dbReference type="EC" id="5.3.1.23" evidence="1"/>
<dbReference type="EMBL" id="CM002242">
    <property type="protein sequence ID" value="EAA30403.1"/>
    <property type="molecule type" value="Genomic_DNA"/>
</dbReference>
<dbReference type="RefSeq" id="XP_959639.1">
    <property type="nucleotide sequence ID" value="XM_954546.2"/>
</dbReference>
<dbReference type="SMR" id="Q7S4G7"/>
<dbReference type="FunCoup" id="Q7S4G7">
    <property type="interactions" value="702"/>
</dbReference>
<dbReference type="STRING" id="367110.Q7S4G7"/>
<dbReference type="PaxDb" id="5141-EFNCRP00000003083"/>
<dbReference type="EnsemblFungi" id="EAA30403">
    <property type="protein sequence ID" value="EAA30403"/>
    <property type="gene ID" value="NCU02226"/>
</dbReference>
<dbReference type="GeneID" id="3875786"/>
<dbReference type="KEGG" id="ncr:NCU02226"/>
<dbReference type="VEuPathDB" id="FungiDB:NCU02226"/>
<dbReference type="HOGENOM" id="CLU_016218_1_3_1"/>
<dbReference type="InParanoid" id="Q7S4G7"/>
<dbReference type="OMA" id="CETRPLN"/>
<dbReference type="OrthoDB" id="2461at2759"/>
<dbReference type="UniPathway" id="UPA00904">
    <property type="reaction ID" value="UER00874"/>
</dbReference>
<dbReference type="Proteomes" id="UP000001805">
    <property type="component" value="Chromosome 7, Linkage Group VII"/>
</dbReference>
<dbReference type="GO" id="GO:0005737">
    <property type="term" value="C:cytoplasm"/>
    <property type="evidence" value="ECO:0007669"/>
    <property type="project" value="UniProtKB-SubCell"/>
</dbReference>
<dbReference type="GO" id="GO:0005634">
    <property type="term" value="C:nucleus"/>
    <property type="evidence" value="ECO:0007669"/>
    <property type="project" value="UniProtKB-SubCell"/>
</dbReference>
<dbReference type="GO" id="GO:0046523">
    <property type="term" value="F:S-methyl-5-thioribose-1-phosphate isomerase activity"/>
    <property type="evidence" value="ECO:0000318"/>
    <property type="project" value="GO_Central"/>
</dbReference>
<dbReference type="GO" id="GO:0019509">
    <property type="term" value="P:L-methionine salvage from methylthioadenosine"/>
    <property type="evidence" value="ECO:0000318"/>
    <property type="project" value="GO_Central"/>
</dbReference>
<dbReference type="FunFam" id="1.20.120.420:FF:000003">
    <property type="entry name" value="Methylthioribose-1-phosphate isomerase"/>
    <property type="match status" value="1"/>
</dbReference>
<dbReference type="FunFam" id="3.40.50.10470:FF:000010">
    <property type="entry name" value="Methylthioribose-1-phosphate isomerase"/>
    <property type="match status" value="1"/>
</dbReference>
<dbReference type="Gene3D" id="1.20.120.420">
    <property type="entry name" value="translation initiation factor eif-2b, domain 1"/>
    <property type="match status" value="1"/>
</dbReference>
<dbReference type="Gene3D" id="3.40.50.10470">
    <property type="entry name" value="Translation initiation factor eif-2b, domain 2"/>
    <property type="match status" value="1"/>
</dbReference>
<dbReference type="HAMAP" id="MF_01678">
    <property type="entry name" value="Salvage_MtnA"/>
    <property type="match status" value="1"/>
</dbReference>
<dbReference type="InterPro" id="IPR000649">
    <property type="entry name" value="IF-2B-related"/>
</dbReference>
<dbReference type="InterPro" id="IPR005251">
    <property type="entry name" value="IF-M1Pi"/>
</dbReference>
<dbReference type="InterPro" id="IPR042529">
    <property type="entry name" value="IF_2B-like_C"/>
</dbReference>
<dbReference type="InterPro" id="IPR011559">
    <property type="entry name" value="Initiation_fac_2B_a/b/d"/>
</dbReference>
<dbReference type="InterPro" id="IPR027363">
    <property type="entry name" value="M1Pi_N"/>
</dbReference>
<dbReference type="InterPro" id="IPR037171">
    <property type="entry name" value="NagB/RpiA_transferase-like"/>
</dbReference>
<dbReference type="NCBIfam" id="TIGR00524">
    <property type="entry name" value="eIF-2B_rel"/>
    <property type="match status" value="1"/>
</dbReference>
<dbReference type="NCBIfam" id="NF004326">
    <property type="entry name" value="PRK05720.1"/>
    <property type="match status" value="1"/>
</dbReference>
<dbReference type="NCBIfam" id="TIGR00512">
    <property type="entry name" value="salvage_mtnA"/>
    <property type="match status" value="1"/>
</dbReference>
<dbReference type="PANTHER" id="PTHR43475">
    <property type="entry name" value="METHYLTHIORIBOSE-1-PHOSPHATE ISOMERASE"/>
    <property type="match status" value="1"/>
</dbReference>
<dbReference type="PANTHER" id="PTHR43475:SF1">
    <property type="entry name" value="METHYLTHIORIBOSE-1-PHOSPHATE ISOMERASE"/>
    <property type="match status" value="1"/>
</dbReference>
<dbReference type="Pfam" id="PF01008">
    <property type="entry name" value="IF-2B"/>
    <property type="match status" value="1"/>
</dbReference>
<dbReference type="SUPFAM" id="SSF100950">
    <property type="entry name" value="NagB/RpiA/CoA transferase-like"/>
    <property type="match status" value="1"/>
</dbReference>
<accession>Q7S4G7</accession>
<sequence length="388" mass="42397">MSALEAIKYSRGKLEVLDQLRLPHEHHYDEVSTSEEAFDCIKAMRVRGAPAIAIVAALAASVELHNGSCTATGTEDVIKYIDSRLDYLYESRPTAVDLGNAVRLLKKTVRGVKTEGLTDAEAKEAIIKAFIEASEEILAKDLKTNKSIGAFGAKWLQEQYKITDDSKITVMTHCNTGSLATSGHGTALGIIRTLRDEGLLRHAYCTETRPYNQGSRLTAFELVHEGIPATLVTDSMAAALFRLRKAEENIAAVIVGADRVVRNGDTANKIGTYQLAVLAKHHGIKFMVAAPTTSIDVDTETGDDIEIEQRKREELTQISGAVVNADGSIDTSKSVRVAIADQRIGVWNPGFDVTPHEYIDAIVTEKGTVVKGEDGKFHFEDLMPERFQ</sequence>
<gene>
    <name type="primary">mri-1</name>
    <name type="ORF">NCU02226</name>
</gene>
<reference key="1">
    <citation type="journal article" date="2003" name="Nature">
        <title>The genome sequence of the filamentous fungus Neurospora crassa.</title>
        <authorList>
            <person name="Galagan J.E."/>
            <person name="Calvo S.E."/>
            <person name="Borkovich K.A."/>
            <person name="Selker E.U."/>
            <person name="Read N.D."/>
            <person name="Jaffe D.B."/>
            <person name="FitzHugh W."/>
            <person name="Ma L.-J."/>
            <person name="Smirnov S."/>
            <person name="Purcell S."/>
            <person name="Rehman B."/>
            <person name="Elkins T."/>
            <person name="Engels R."/>
            <person name="Wang S."/>
            <person name="Nielsen C.B."/>
            <person name="Butler J."/>
            <person name="Endrizzi M."/>
            <person name="Qui D."/>
            <person name="Ianakiev P."/>
            <person name="Bell-Pedersen D."/>
            <person name="Nelson M.A."/>
            <person name="Werner-Washburne M."/>
            <person name="Selitrennikoff C.P."/>
            <person name="Kinsey J.A."/>
            <person name="Braun E.L."/>
            <person name="Zelter A."/>
            <person name="Schulte U."/>
            <person name="Kothe G.O."/>
            <person name="Jedd G."/>
            <person name="Mewes H.-W."/>
            <person name="Staben C."/>
            <person name="Marcotte E."/>
            <person name="Greenberg D."/>
            <person name="Roy A."/>
            <person name="Foley K."/>
            <person name="Naylor J."/>
            <person name="Stange-Thomann N."/>
            <person name="Barrett R."/>
            <person name="Gnerre S."/>
            <person name="Kamal M."/>
            <person name="Kamvysselis M."/>
            <person name="Mauceli E.W."/>
            <person name="Bielke C."/>
            <person name="Rudd S."/>
            <person name="Frishman D."/>
            <person name="Krystofova S."/>
            <person name="Rasmussen C."/>
            <person name="Metzenberg R.L."/>
            <person name="Perkins D.D."/>
            <person name="Kroken S."/>
            <person name="Cogoni C."/>
            <person name="Macino G."/>
            <person name="Catcheside D.E.A."/>
            <person name="Li W."/>
            <person name="Pratt R.J."/>
            <person name="Osmani S.A."/>
            <person name="DeSouza C.P.C."/>
            <person name="Glass N.L."/>
            <person name="Orbach M.J."/>
            <person name="Berglund J.A."/>
            <person name="Voelker R."/>
            <person name="Yarden O."/>
            <person name="Plamann M."/>
            <person name="Seiler S."/>
            <person name="Dunlap J.C."/>
            <person name="Radford A."/>
            <person name="Aramayo R."/>
            <person name="Natvig D.O."/>
            <person name="Alex L.A."/>
            <person name="Mannhaupt G."/>
            <person name="Ebbole D.J."/>
            <person name="Freitag M."/>
            <person name="Paulsen I."/>
            <person name="Sachs M.S."/>
            <person name="Lander E.S."/>
            <person name="Nusbaum C."/>
            <person name="Birren B.W."/>
        </authorList>
    </citation>
    <scope>NUCLEOTIDE SEQUENCE [LARGE SCALE GENOMIC DNA]</scope>
    <source>
        <strain>ATCC 24698 / 74-OR23-1A / CBS 708.71 / DSM 1257 / FGSC 987</strain>
    </source>
</reference>
<evidence type="ECO:0000255" key="1">
    <source>
        <dbReference type="HAMAP-Rule" id="MF_03119"/>
    </source>
</evidence>
<proteinExistence type="inferred from homology"/>